<keyword id="KW-0028">Amino-acid biosynthesis</keyword>
<keyword id="KW-0067">ATP-binding</keyword>
<keyword id="KW-0963">Cytoplasm</keyword>
<keyword id="KW-0418">Kinase</keyword>
<keyword id="KW-0547">Nucleotide-binding</keyword>
<keyword id="KW-0641">Proline biosynthesis</keyword>
<keyword id="KW-0808">Transferase</keyword>
<feature type="chain" id="PRO_0000230074" description="Glutamate 5-kinase">
    <location>
        <begin position="1"/>
        <end position="362"/>
    </location>
</feature>
<feature type="domain" description="PUA" evidence="1">
    <location>
        <begin position="267"/>
        <end position="348"/>
    </location>
</feature>
<feature type="binding site" evidence="1">
    <location>
        <position position="3"/>
    </location>
    <ligand>
        <name>ATP</name>
        <dbReference type="ChEBI" id="CHEBI:30616"/>
    </ligand>
</feature>
<feature type="binding site" evidence="1">
    <location>
        <position position="43"/>
    </location>
    <ligand>
        <name>substrate</name>
    </ligand>
</feature>
<feature type="binding site" evidence="1">
    <location>
        <position position="128"/>
    </location>
    <ligand>
        <name>substrate</name>
    </ligand>
</feature>
<feature type="binding site" evidence="1">
    <location>
        <position position="140"/>
    </location>
    <ligand>
        <name>substrate</name>
    </ligand>
</feature>
<feature type="binding site" evidence="1">
    <location>
        <begin position="160"/>
        <end position="161"/>
    </location>
    <ligand>
        <name>ATP</name>
        <dbReference type="ChEBI" id="CHEBI:30616"/>
    </ligand>
</feature>
<feature type="binding site" evidence="1">
    <location>
        <begin position="202"/>
        <end position="208"/>
    </location>
    <ligand>
        <name>ATP</name>
        <dbReference type="ChEBI" id="CHEBI:30616"/>
    </ligand>
</feature>
<organism>
    <name type="scientific">Xanthomonas euvesicatoria pv. vesicatoria (strain 85-10)</name>
    <name type="common">Xanthomonas campestris pv. vesicatoria</name>
    <dbReference type="NCBI Taxonomy" id="316273"/>
    <lineage>
        <taxon>Bacteria</taxon>
        <taxon>Pseudomonadati</taxon>
        <taxon>Pseudomonadota</taxon>
        <taxon>Gammaproteobacteria</taxon>
        <taxon>Lysobacterales</taxon>
        <taxon>Lysobacteraceae</taxon>
        <taxon>Xanthomonas</taxon>
    </lineage>
</organism>
<name>PROB_XANE5</name>
<gene>
    <name evidence="1" type="primary">proB</name>
    <name type="ordered locus">XCV2542</name>
</gene>
<reference key="1">
    <citation type="journal article" date="2005" name="J. Bacteriol.">
        <title>Insights into genome plasticity and pathogenicity of the plant pathogenic Bacterium Xanthomonas campestris pv. vesicatoria revealed by the complete genome sequence.</title>
        <authorList>
            <person name="Thieme F."/>
            <person name="Koebnik R."/>
            <person name="Bekel T."/>
            <person name="Berger C."/>
            <person name="Boch J."/>
            <person name="Buettner D."/>
            <person name="Caldana C."/>
            <person name="Gaigalat L."/>
            <person name="Goesmann A."/>
            <person name="Kay S."/>
            <person name="Kirchner O."/>
            <person name="Lanz C."/>
            <person name="Linke B."/>
            <person name="McHardy A.C."/>
            <person name="Meyer F."/>
            <person name="Mittenhuber G."/>
            <person name="Nies D.H."/>
            <person name="Niesbach-Kloesgen U."/>
            <person name="Patschkowski T."/>
            <person name="Rueckert C."/>
            <person name="Rupp O."/>
            <person name="Schneiker S."/>
            <person name="Schuster S.C."/>
            <person name="Vorhoelter F.J."/>
            <person name="Weber E."/>
            <person name="Puehler A."/>
            <person name="Bonas U."/>
            <person name="Bartels D."/>
            <person name="Kaiser O."/>
        </authorList>
    </citation>
    <scope>NUCLEOTIDE SEQUENCE [LARGE SCALE GENOMIC DNA]</scope>
    <source>
        <strain>85-10</strain>
    </source>
</reference>
<protein>
    <recommendedName>
        <fullName evidence="1">Glutamate 5-kinase</fullName>
        <ecNumber evidence="1">2.7.2.11</ecNumber>
    </recommendedName>
    <alternativeName>
        <fullName evidence="1">Gamma-glutamyl kinase</fullName>
        <shortName evidence="1">GK</shortName>
    </alternativeName>
</protein>
<sequence length="362" mass="37928">MLKVGSSLLAADGGGLSPRFALGLAQFVSANLAAGRELVIVSSGAVAAGRAILPKAADVGAPIAARQALAALGQAQLIALWQRFFERPVAQVLLTHDDLRNRRRYLNARATLGELLRLGALPVINENDTVSVDELKLGDNDNLAAIVAALVDADALFIATDIDGLYSADPRSNPLARPLDDVPELTPEVLAMAGGSGSNVGTGGMRTKLEAAAKAGAAGIETYLFNGRSGEVVRALAQDRLRGTRIHAARARIAARKYWLRHAPVEAGAILIDDGAAAALTGKGASLLPGGVAGAQGDFRRGDMVEIRLRDTAGDQCLARGVSQYSALDIRRIAGRHSREIENVLGYSYGENVVHRDDLVVL</sequence>
<accession>Q3BSJ0</accession>
<evidence type="ECO:0000255" key="1">
    <source>
        <dbReference type="HAMAP-Rule" id="MF_00456"/>
    </source>
</evidence>
<evidence type="ECO:0000305" key="2"/>
<proteinExistence type="inferred from homology"/>
<dbReference type="EC" id="2.7.2.11" evidence="1"/>
<dbReference type="EMBL" id="AM039952">
    <property type="protein sequence ID" value="CAJ24219.1"/>
    <property type="status" value="ALT_INIT"/>
    <property type="molecule type" value="Genomic_DNA"/>
</dbReference>
<dbReference type="SMR" id="Q3BSJ0"/>
<dbReference type="STRING" id="456327.BJD11_10190"/>
<dbReference type="KEGG" id="xcv:XCV2542"/>
<dbReference type="eggNOG" id="COG0263">
    <property type="taxonomic scope" value="Bacteria"/>
</dbReference>
<dbReference type="HOGENOM" id="CLU_025400_2_0_6"/>
<dbReference type="UniPathway" id="UPA00098">
    <property type="reaction ID" value="UER00359"/>
</dbReference>
<dbReference type="Proteomes" id="UP000007069">
    <property type="component" value="Chromosome"/>
</dbReference>
<dbReference type="GO" id="GO:0005829">
    <property type="term" value="C:cytosol"/>
    <property type="evidence" value="ECO:0007669"/>
    <property type="project" value="TreeGrafter"/>
</dbReference>
<dbReference type="GO" id="GO:0005524">
    <property type="term" value="F:ATP binding"/>
    <property type="evidence" value="ECO:0007669"/>
    <property type="project" value="UniProtKB-KW"/>
</dbReference>
<dbReference type="GO" id="GO:0004349">
    <property type="term" value="F:glutamate 5-kinase activity"/>
    <property type="evidence" value="ECO:0007669"/>
    <property type="project" value="UniProtKB-UniRule"/>
</dbReference>
<dbReference type="GO" id="GO:0003723">
    <property type="term" value="F:RNA binding"/>
    <property type="evidence" value="ECO:0007669"/>
    <property type="project" value="InterPro"/>
</dbReference>
<dbReference type="GO" id="GO:0055129">
    <property type="term" value="P:L-proline biosynthetic process"/>
    <property type="evidence" value="ECO:0007669"/>
    <property type="project" value="UniProtKB-UniRule"/>
</dbReference>
<dbReference type="CDD" id="cd04242">
    <property type="entry name" value="AAK_G5K_ProB"/>
    <property type="match status" value="1"/>
</dbReference>
<dbReference type="CDD" id="cd21157">
    <property type="entry name" value="PUA_G5K"/>
    <property type="match status" value="1"/>
</dbReference>
<dbReference type="FunFam" id="2.30.130.10:FF:000007">
    <property type="entry name" value="Glutamate 5-kinase"/>
    <property type="match status" value="1"/>
</dbReference>
<dbReference type="FunFam" id="3.40.1160.10:FF:000018">
    <property type="entry name" value="Glutamate 5-kinase"/>
    <property type="match status" value="1"/>
</dbReference>
<dbReference type="Gene3D" id="3.40.1160.10">
    <property type="entry name" value="Acetylglutamate kinase-like"/>
    <property type="match status" value="1"/>
</dbReference>
<dbReference type="Gene3D" id="2.30.130.10">
    <property type="entry name" value="PUA domain"/>
    <property type="match status" value="1"/>
</dbReference>
<dbReference type="HAMAP" id="MF_00456">
    <property type="entry name" value="ProB"/>
    <property type="match status" value="1"/>
</dbReference>
<dbReference type="InterPro" id="IPR036393">
    <property type="entry name" value="AceGlu_kinase-like_sf"/>
</dbReference>
<dbReference type="InterPro" id="IPR001048">
    <property type="entry name" value="Asp/Glu/Uridylate_kinase"/>
</dbReference>
<dbReference type="InterPro" id="IPR041739">
    <property type="entry name" value="G5K_ProB"/>
</dbReference>
<dbReference type="InterPro" id="IPR001057">
    <property type="entry name" value="Glu/AcGlu_kinase"/>
</dbReference>
<dbReference type="InterPro" id="IPR011529">
    <property type="entry name" value="Glu_5kinase"/>
</dbReference>
<dbReference type="InterPro" id="IPR005715">
    <property type="entry name" value="Glu_5kinase/COase_Synthase"/>
</dbReference>
<dbReference type="InterPro" id="IPR019797">
    <property type="entry name" value="Glutamate_5-kinase_CS"/>
</dbReference>
<dbReference type="InterPro" id="IPR002478">
    <property type="entry name" value="PUA"/>
</dbReference>
<dbReference type="InterPro" id="IPR015947">
    <property type="entry name" value="PUA-like_sf"/>
</dbReference>
<dbReference type="InterPro" id="IPR036974">
    <property type="entry name" value="PUA_sf"/>
</dbReference>
<dbReference type="NCBIfam" id="TIGR01027">
    <property type="entry name" value="proB"/>
    <property type="match status" value="1"/>
</dbReference>
<dbReference type="PANTHER" id="PTHR43654">
    <property type="entry name" value="GLUTAMATE 5-KINASE"/>
    <property type="match status" value="1"/>
</dbReference>
<dbReference type="PANTHER" id="PTHR43654:SF1">
    <property type="entry name" value="ISOPENTENYL PHOSPHATE KINASE"/>
    <property type="match status" value="1"/>
</dbReference>
<dbReference type="Pfam" id="PF00696">
    <property type="entry name" value="AA_kinase"/>
    <property type="match status" value="1"/>
</dbReference>
<dbReference type="Pfam" id="PF01472">
    <property type="entry name" value="PUA"/>
    <property type="match status" value="1"/>
</dbReference>
<dbReference type="PIRSF" id="PIRSF000729">
    <property type="entry name" value="GK"/>
    <property type="match status" value="1"/>
</dbReference>
<dbReference type="PRINTS" id="PR00474">
    <property type="entry name" value="GLU5KINASE"/>
</dbReference>
<dbReference type="SMART" id="SM00359">
    <property type="entry name" value="PUA"/>
    <property type="match status" value="1"/>
</dbReference>
<dbReference type="SUPFAM" id="SSF53633">
    <property type="entry name" value="Carbamate kinase-like"/>
    <property type="match status" value="1"/>
</dbReference>
<dbReference type="SUPFAM" id="SSF88697">
    <property type="entry name" value="PUA domain-like"/>
    <property type="match status" value="1"/>
</dbReference>
<dbReference type="PROSITE" id="PS00902">
    <property type="entry name" value="GLUTAMATE_5_KINASE"/>
    <property type="match status" value="1"/>
</dbReference>
<dbReference type="PROSITE" id="PS50890">
    <property type="entry name" value="PUA"/>
    <property type="match status" value="1"/>
</dbReference>
<comment type="function">
    <text evidence="1">Catalyzes the transfer of a phosphate group to glutamate to form L-glutamate 5-phosphate.</text>
</comment>
<comment type="catalytic activity">
    <reaction evidence="1">
        <text>L-glutamate + ATP = L-glutamyl 5-phosphate + ADP</text>
        <dbReference type="Rhea" id="RHEA:14877"/>
        <dbReference type="ChEBI" id="CHEBI:29985"/>
        <dbReference type="ChEBI" id="CHEBI:30616"/>
        <dbReference type="ChEBI" id="CHEBI:58274"/>
        <dbReference type="ChEBI" id="CHEBI:456216"/>
        <dbReference type="EC" id="2.7.2.11"/>
    </reaction>
</comment>
<comment type="pathway">
    <text evidence="1">Amino-acid biosynthesis; L-proline biosynthesis; L-glutamate 5-semialdehyde from L-glutamate: step 1/2.</text>
</comment>
<comment type="subcellular location">
    <subcellularLocation>
        <location evidence="1">Cytoplasm</location>
    </subcellularLocation>
</comment>
<comment type="similarity">
    <text evidence="1">Belongs to the glutamate 5-kinase family.</text>
</comment>
<comment type="sequence caution" evidence="2">
    <conflict type="erroneous initiation">
        <sequence resource="EMBL-CDS" id="CAJ24219"/>
    </conflict>
</comment>